<organism>
    <name type="scientific">Schizosaccharomyces pombe (strain 972 / ATCC 24843)</name>
    <name type="common">Fission yeast</name>
    <dbReference type="NCBI Taxonomy" id="284812"/>
    <lineage>
        <taxon>Eukaryota</taxon>
        <taxon>Fungi</taxon>
        <taxon>Dikarya</taxon>
        <taxon>Ascomycota</taxon>
        <taxon>Taphrinomycotina</taxon>
        <taxon>Schizosaccharomycetes</taxon>
        <taxon>Schizosaccharomycetales</taxon>
        <taxon>Schizosaccharomycetaceae</taxon>
        <taxon>Schizosaccharomyces</taxon>
    </lineage>
</organism>
<protein>
    <recommendedName>
        <fullName>m7GpppX diphosphatase</fullName>
        <ecNumber evidence="2">3.6.1.59</ecNumber>
    </recommendedName>
    <alternativeName>
        <fullName>Hint-related 7meGMP-directed hydrolase 1</fullName>
    </alternativeName>
    <alternativeName>
        <fullName>Nuclear histidine triad (HIT) motif protein 1</fullName>
    </alternativeName>
    <alternativeName>
        <fullName>Scavenger mRNA-decapping enzyme DcpS</fullName>
    </alternativeName>
</protein>
<reference key="1">
    <citation type="journal article" date="2002" name="Nature">
        <title>The genome sequence of Schizosaccharomyces pombe.</title>
        <authorList>
            <person name="Wood V."/>
            <person name="Gwilliam R."/>
            <person name="Rajandream M.A."/>
            <person name="Lyne M.H."/>
            <person name="Lyne R."/>
            <person name="Stewart A."/>
            <person name="Sgouros J.G."/>
            <person name="Peat N."/>
            <person name="Hayles J."/>
            <person name="Baker S.G."/>
            <person name="Basham D."/>
            <person name="Bowman S."/>
            <person name="Brooks K."/>
            <person name="Brown D."/>
            <person name="Brown S."/>
            <person name="Chillingworth T."/>
            <person name="Churcher C.M."/>
            <person name="Collins M."/>
            <person name="Connor R."/>
            <person name="Cronin A."/>
            <person name="Davis P."/>
            <person name="Feltwell T."/>
            <person name="Fraser A."/>
            <person name="Gentles S."/>
            <person name="Goble A."/>
            <person name="Hamlin N."/>
            <person name="Harris D.E."/>
            <person name="Hidalgo J."/>
            <person name="Hodgson G."/>
            <person name="Holroyd S."/>
            <person name="Hornsby T."/>
            <person name="Howarth S."/>
            <person name="Huckle E.J."/>
            <person name="Hunt S."/>
            <person name="Jagels K."/>
            <person name="James K.D."/>
            <person name="Jones L."/>
            <person name="Jones M."/>
            <person name="Leather S."/>
            <person name="McDonald S."/>
            <person name="McLean J."/>
            <person name="Mooney P."/>
            <person name="Moule S."/>
            <person name="Mungall K.L."/>
            <person name="Murphy L.D."/>
            <person name="Niblett D."/>
            <person name="Odell C."/>
            <person name="Oliver K."/>
            <person name="O'Neil S."/>
            <person name="Pearson D."/>
            <person name="Quail M.A."/>
            <person name="Rabbinowitsch E."/>
            <person name="Rutherford K.M."/>
            <person name="Rutter S."/>
            <person name="Saunders D."/>
            <person name="Seeger K."/>
            <person name="Sharp S."/>
            <person name="Skelton J."/>
            <person name="Simmonds M.N."/>
            <person name="Squares R."/>
            <person name="Squares S."/>
            <person name="Stevens K."/>
            <person name="Taylor K."/>
            <person name="Taylor R.G."/>
            <person name="Tivey A."/>
            <person name="Walsh S.V."/>
            <person name="Warren T."/>
            <person name="Whitehead S."/>
            <person name="Woodward J.R."/>
            <person name="Volckaert G."/>
            <person name="Aert R."/>
            <person name="Robben J."/>
            <person name="Grymonprez B."/>
            <person name="Weltjens I."/>
            <person name="Vanstreels E."/>
            <person name="Rieger M."/>
            <person name="Schaefer M."/>
            <person name="Mueller-Auer S."/>
            <person name="Gabel C."/>
            <person name="Fuchs M."/>
            <person name="Duesterhoeft A."/>
            <person name="Fritzc C."/>
            <person name="Holzer E."/>
            <person name="Moestl D."/>
            <person name="Hilbert H."/>
            <person name="Borzym K."/>
            <person name="Langer I."/>
            <person name="Beck A."/>
            <person name="Lehrach H."/>
            <person name="Reinhardt R."/>
            <person name="Pohl T.M."/>
            <person name="Eger P."/>
            <person name="Zimmermann W."/>
            <person name="Wedler H."/>
            <person name="Wambutt R."/>
            <person name="Purnelle B."/>
            <person name="Goffeau A."/>
            <person name="Cadieu E."/>
            <person name="Dreano S."/>
            <person name="Gloux S."/>
            <person name="Lelaure V."/>
            <person name="Mottier S."/>
            <person name="Galibert F."/>
            <person name="Aves S.J."/>
            <person name="Xiang Z."/>
            <person name="Hunt C."/>
            <person name="Moore K."/>
            <person name="Hurst S.M."/>
            <person name="Lucas M."/>
            <person name="Rochet M."/>
            <person name="Gaillardin C."/>
            <person name="Tallada V.A."/>
            <person name="Garzon A."/>
            <person name="Thode G."/>
            <person name="Daga R.R."/>
            <person name="Cruzado L."/>
            <person name="Jimenez J."/>
            <person name="Sanchez M."/>
            <person name="del Rey F."/>
            <person name="Benito J."/>
            <person name="Dominguez A."/>
            <person name="Revuelta J.L."/>
            <person name="Moreno S."/>
            <person name="Armstrong J."/>
            <person name="Forsburg S.L."/>
            <person name="Cerutti L."/>
            <person name="Lowe T."/>
            <person name="McCombie W.R."/>
            <person name="Paulsen I."/>
            <person name="Potashkin J."/>
            <person name="Shpakovski G.V."/>
            <person name="Ussery D."/>
            <person name="Barrell B.G."/>
            <person name="Nurse P."/>
        </authorList>
    </citation>
    <scope>NUCLEOTIDE SEQUENCE [LARGE SCALE GENOMIC DNA]</scope>
    <source>
        <strain>972 / ATCC 24843</strain>
    </source>
</reference>
<reference key="2">
    <citation type="journal article" date="2002" name="Mol. Microbiol.">
        <title>A nuclear protein in Schizosaccharomyces pombe with homology to the human tumour suppressor Fhit has decapping activity.</title>
        <authorList>
            <person name="Salehi Z."/>
            <person name="Geffers L."/>
            <person name="Vilela C."/>
            <person name="Birkenhaeger R."/>
            <person name="Ptushkina M."/>
            <person name="Berthelot K."/>
            <person name="Ferro M."/>
            <person name="Gaskell S."/>
            <person name="Hagan I."/>
            <person name="Stapley B."/>
            <person name="McCarthy J.E.G."/>
        </authorList>
    </citation>
    <scope>PROTEIN SEQUENCE OF 95-101 AND 127-145</scope>
    <scope>FUNCTION</scope>
    <scope>CATALYTIC ACTIVITY</scope>
    <scope>SUBCELLULAR LOCATION</scope>
</reference>
<reference key="3">
    <citation type="journal article" date="2006" name="Nat. Biotechnol.">
        <title>ORFeome cloning and global analysis of protein localization in the fission yeast Schizosaccharomyces pombe.</title>
        <authorList>
            <person name="Matsuyama A."/>
            <person name="Arai R."/>
            <person name="Yashiroda Y."/>
            <person name="Shirai A."/>
            <person name="Kamata A."/>
            <person name="Sekido S."/>
            <person name="Kobayashi Y."/>
            <person name="Hashimoto A."/>
            <person name="Hamamoto M."/>
            <person name="Hiraoka Y."/>
            <person name="Horinouchi S."/>
            <person name="Yoshida M."/>
        </authorList>
    </citation>
    <scope>SUBCELLULAR LOCATION [LARGE SCALE ANALYSIS]</scope>
</reference>
<keyword id="KW-0963">Cytoplasm</keyword>
<keyword id="KW-0903">Direct protein sequencing</keyword>
<keyword id="KW-0378">Hydrolase</keyword>
<keyword id="KW-0539">Nucleus</keyword>
<keyword id="KW-1185">Reference proteome</keyword>
<comment type="function">
    <text evidence="2">Decapping scavenger enzyme that catalyzes the cleavage of a residual cap structure following the degradation of mRNAs by the 3'-&gt;5' exosome-mediated mRNA decay pathway. Hydrolyzes cap analog structures like 7-methylguanosine nucleoside triphosphate (m7GpppG) with up to 10 nucleotide substrates (small capped oligoribonucleotides) and specifically releases 5'-phosphorylated RNA fragments and 7-methylguanosine monophosphate (m7GMP). Has no activity towards mRNA molecules longer than 25 nucleotides. May also play a role in the 5'-&gt;3 mRNA decay pathway; m7GDP, the downstream product released by the 5'-&gt;3' mRNA mediated decapping activity, may be also converted by DCS1 to m7GMP. Inhibits mRNA translation. Binds to the m7GpppG cap analog.</text>
</comment>
<comment type="catalytic activity">
    <reaction evidence="2">
        <text>a 5'-end (N(7)-methyl 5'-triphosphoguanosine)-ribonucleoside in mRNA + H2O = N(7)-methyl-GMP + a 5'-end diphospho-ribonucleoside in mRNA + 2 H(+)</text>
        <dbReference type="Rhea" id="RHEA:65388"/>
        <dbReference type="Rhea" id="RHEA-COMP:17165"/>
        <dbReference type="Rhea" id="RHEA-COMP:17167"/>
        <dbReference type="ChEBI" id="CHEBI:15377"/>
        <dbReference type="ChEBI" id="CHEBI:15378"/>
        <dbReference type="ChEBI" id="CHEBI:58285"/>
        <dbReference type="ChEBI" id="CHEBI:156461"/>
        <dbReference type="ChEBI" id="CHEBI:167616"/>
        <dbReference type="EC" id="3.6.1.59"/>
    </reaction>
</comment>
<comment type="subcellular location">
    <subcellularLocation>
        <location>Cytoplasm</location>
    </subcellularLocation>
    <subcellularLocation>
        <location>Nucleus</location>
    </subcellularLocation>
    <text>Predominantly nuclear.</text>
</comment>
<comment type="similarity">
    <text evidence="3">Belongs to the HIT family.</text>
</comment>
<sequence length="304" mass="35107">MEESSAAKIQLLKEFKFEKILKDDTKSKIITLYGKIRNEVALLLLEKTAFDLNTIKLDQLATFLQDTKLVENNDVFHWFLSTNFQDCSTLPSVKSTLIWPASETHVRKYSSQKKRMVCETPEMYLKVTKPFIETQRGPQIQWVENILTHKAEAERIVVEDPDPLNGFIVIPDLKWDRQTMSALNLMAIVHATDIASIRDLKYKHIPLLENIRNKVLTEVPKQFSVDKNQLKMFVHYLPSYYHLHVHILHVDHETGDGSAVGRAILLDDVIDRLRNSPDGLENVNITFNIGEQHFLFQPLTNMNA</sequence>
<feature type="chain" id="PRO_0000362149" description="m7GpppX diphosphatase">
    <location>
        <begin position="1"/>
        <end position="304"/>
    </location>
</feature>
<feature type="short sequence motif" description="Histidine triad motif" evidence="1">
    <location>
        <begin position="242"/>
        <end position="246"/>
    </location>
</feature>
<feature type="active site" description="Nucleophile" evidence="1">
    <location>
        <position position="244"/>
    </location>
</feature>
<feature type="binding site" evidence="1">
    <location>
        <position position="152"/>
    </location>
    <ligand>
        <name>substrate</name>
    </ligand>
</feature>
<feature type="binding site" evidence="1">
    <location>
        <position position="174"/>
    </location>
    <ligand>
        <name>substrate</name>
    </ligand>
</feature>
<feature type="binding site" evidence="1">
    <location>
        <begin position="235"/>
        <end position="246"/>
    </location>
    <ligand>
        <name>substrate</name>
    </ligand>
</feature>
<gene>
    <name type="primary">nhm1</name>
    <name type="synonym">dcps</name>
    <name type="ORF">SPBP4H10.20</name>
</gene>
<evidence type="ECO:0000250" key="1"/>
<evidence type="ECO:0000269" key="2">
    <source>
    </source>
</evidence>
<evidence type="ECO:0000305" key="3"/>
<accession>Q9P7C9</accession>
<proteinExistence type="evidence at protein level"/>
<dbReference type="EC" id="3.6.1.59" evidence="2"/>
<dbReference type="EMBL" id="CU329671">
    <property type="protein sequence ID" value="CAB83178.1"/>
    <property type="molecule type" value="Genomic_DNA"/>
</dbReference>
<dbReference type="RefSeq" id="NP_596194.1">
    <property type="nucleotide sequence ID" value="NM_001022113.2"/>
</dbReference>
<dbReference type="SMR" id="Q9P7C9"/>
<dbReference type="FunCoup" id="Q9P7C9">
    <property type="interactions" value="517"/>
</dbReference>
<dbReference type="STRING" id="284812.Q9P7C9"/>
<dbReference type="PaxDb" id="4896-SPBP4H10.20.1"/>
<dbReference type="EnsemblFungi" id="SPBP4H10.20.1">
    <property type="protein sequence ID" value="SPBP4H10.20.1:pep"/>
    <property type="gene ID" value="SPBP4H10.20"/>
</dbReference>
<dbReference type="GeneID" id="2541340"/>
<dbReference type="KEGG" id="spo:2541340"/>
<dbReference type="PomBase" id="SPBP4H10.20">
    <property type="gene designation" value="nhm1"/>
</dbReference>
<dbReference type="VEuPathDB" id="FungiDB:SPBP4H10.20"/>
<dbReference type="eggNOG" id="KOG3969">
    <property type="taxonomic scope" value="Eukaryota"/>
</dbReference>
<dbReference type="HOGENOM" id="CLU_041045_1_0_1"/>
<dbReference type="InParanoid" id="Q9P7C9"/>
<dbReference type="OMA" id="HVHINPI"/>
<dbReference type="PhylomeDB" id="Q9P7C9"/>
<dbReference type="Reactome" id="R-SPO-429958">
    <property type="pathway name" value="mRNA decay by 3' to 5' exoribonuclease"/>
</dbReference>
<dbReference type="PRO" id="PR:Q9P7C9"/>
<dbReference type="Proteomes" id="UP000002485">
    <property type="component" value="Chromosome II"/>
</dbReference>
<dbReference type="GO" id="GO:0005737">
    <property type="term" value="C:cytoplasm"/>
    <property type="evidence" value="ECO:0000314"/>
    <property type="project" value="UniProtKB"/>
</dbReference>
<dbReference type="GO" id="GO:0005829">
    <property type="term" value="C:cytosol"/>
    <property type="evidence" value="ECO:0007005"/>
    <property type="project" value="PomBase"/>
</dbReference>
<dbReference type="GO" id="GO:0005634">
    <property type="term" value="C:nucleus"/>
    <property type="evidence" value="ECO:0000314"/>
    <property type="project" value="PomBase"/>
</dbReference>
<dbReference type="GO" id="GO:0000932">
    <property type="term" value="C:P-body"/>
    <property type="evidence" value="ECO:0000318"/>
    <property type="project" value="GO_Central"/>
</dbReference>
<dbReference type="GO" id="GO:0140932">
    <property type="term" value="F:5'-(N(7)-methyl 5'-triphosphoguanosine)-[mRNA] diphosphatase activity"/>
    <property type="evidence" value="ECO:0000314"/>
    <property type="project" value="UniProtKB"/>
</dbReference>
<dbReference type="GO" id="GO:0000340">
    <property type="term" value="F:RNA 7-methylguanosine cap binding"/>
    <property type="evidence" value="ECO:0000314"/>
    <property type="project" value="UniProtKB"/>
</dbReference>
<dbReference type="GO" id="GO:0000290">
    <property type="term" value="P:deadenylation-dependent decapping of nuclear-transcribed mRNA"/>
    <property type="evidence" value="ECO:0000315"/>
    <property type="project" value="PomBase"/>
</dbReference>
<dbReference type="FunFam" id="3.30.428.10:FF:000016">
    <property type="entry name" value="Scavenger mRNA decapping enzyme"/>
    <property type="match status" value="1"/>
</dbReference>
<dbReference type="Gene3D" id="3.30.428.10">
    <property type="entry name" value="HIT-like"/>
    <property type="match status" value="1"/>
</dbReference>
<dbReference type="Gene3D" id="3.30.200.40">
    <property type="entry name" value="Scavenger mRNA decapping enzyme, N-terminal domain"/>
    <property type="match status" value="1"/>
</dbReference>
<dbReference type="InterPro" id="IPR008594">
    <property type="entry name" value="DcpS/DCS2"/>
</dbReference>
<dbReference type="InterPro" id="IPR036265">
    <property type="entry name" value="HIT-like_sf"/>
</dbReference>
<dbReference type="InterPro" id="IPR011145">
    <property type="entry name" value="Scavenger_mRNA_decap_enz_N"/>
</dbReference>
<dbReference type="PANTHER" id="PTHR12978">
    <property type="entry name" value="HISTIDINE TRIAD HIT PROTEIN MEMBER"/>
    <property type="match status" value="1"/>
</dbReference>
<dbReference type="PANTHER" id="PTHR12978:SF0">
    <property type="entry name" value="M7GPPPX DIPHOSPHATASE"/>
    <property type="match status" value="1"/>
</dbReference>
<dbReference type="Pfam" id="PF05652">
    <property type="entry name" value="DcpS"/>
    <property type="match status" value="1"/>
</dbReference>
<dbReference type="Pfam" id="PF11969">
    <property type="entry name" value="DcpS_C"/>
    <property type="match status" value="1"/>
</dbReference>
<dbReference type="PIRSF" id="PIRSF028973">
    <property type="entry name" value="Scavenger_mRNA_decap_enz"/>
    <property type="match status" value="1"/>
</dbReference>
<dbReference type="SUPFAM" id="SSF54197">
    <property type="entry name" value="HIT-like"/>
    <property type="match status" value="1"/>
</dbReference>
<dbReference type="SUPFAM" id="SSF102860">
    <property type="entry name" value="mRNA decapping enzyme DcpS N-terminal domain"/>
    <property type="match status" value="1"/>
</dbReference>
<name>DCPS_SCHPO</name>